<gene>
    <name evidence="1" type="primary">betB</name>
    <name type="ordered locus">BURPS1106A_A1836</name>
</gene>
<reference key="1">
    <citation type="journal article" date="2010" name="Genome Biol. Evol.">
        <title>Continuing evolution of Burkholderia mallei through genome reduction and large-scale rearrangements.</title>
        <authorList>
            <person name="Losada L."/>
            <person name="Ronning C.M."/>
            <person name="DeShazer D."/>
            <person name="Woods D."/>
            <person name="Fedorova N."/>
            <person name="Kim H.S."/>
            <person name="Shabalina S.A."/>
            <person name="Pearson T.R."/>
            <person name="Brinkac L."/>
            <person name="Tan P."/>
            <person name="Nandi T."/>
            <person name="Crabtree J."/>
            <person name="Badger J."/>
            <person name="Beckstrom-Sternberg S."/>
            <person name="Saqib M."/>
            <person name="Schutzer S.E."/>
            <person name="Keim P."/>
            <person name="Nierman W.C."/>
        </authorList>
    </citation>
    <scope>NUCLEOTIDE SEQUENCE [LARGE SCALE GENOMIC DNA]</scope>
    <source>
        <strain>1106a</strain>
    </source>
</reference>
<organism>
    <name type="scientific">Burkholderia pseudomallei (strain 1106a)</name>
    <dbReference type="NCBI Taxonomy" id="357348"/>
    <lineage>
        <taxon>Bacteria</taxon>
        <taxon>Pseudomonadati</taxon>
        <taxon>Pseudomonadota</taxon>
        <taxon>Betaproteobacteria</taxon>
        <taxon>Burkholderiales</taxon>
        <taxon>Burkholderiaceae</taxon>
        <taxon>Burkholderia</taxon>
        <taxon>pseudomallei group</taxon>
    </lineage>
</organism>
<sequence>MSVYGLQRLYIAGAHADATSGKTFDTFDPATGELLARVQQASADDVDRAVASAREGQREWAAMTAMQRSRILRRAVELLRERNDALAELEMRDTGKPIAETRAVDIVTGADVIEYYAGLATAIEGLQVPLRPESFVYTRREPLGVCAGIGAWNYPIQIACWKSAPALAAGNAMIFKPSEVTPLSALKLAEIYTEAGVPAGVFNVVQGDGSVGALLSAHPGIAKVSFTGGVETGKKVMSLAGASSLKEVTMELGGKSPLIVFDDADLDRAADIAVTANFFSAGQVCTNGTRVFVQQAVKDAFVERVLARVARIRVGKPSDSDTNFGPLASAAQLDKVLGYIDSGKAEGAKLLAGGARLVNDHFASGQYVAPTVFGDCRDDMRIVREEIFGPVMSILSFETEDEAIARANATDYGLAAGVVTENLSRAHRAIHRLEAGICWINTWGESPAEMPVGGYKQSGVGRENGITTLEHYTRIKSVQVELGRYQPVF</sequence>
<dbReference type="EC" id="1.2.1.8" evidence="1"/>
<dbReference type="EMBL" id="CP000573">
    <property type="protein sequence ID" value="ABN93040.1"/>
    <property type="molecule type" value="Genomic_DNA"/>
</dbReference>
<dbReference type="RefSeq" id="WP_004528662.1">
    <property type="nucleotide sequence ID" value="NC_009078.1"/>
</dbReference>
<dbReference type="SMR" id="A3P6B0"/>
<dbReference type="KEGG" id="bpl:BURPS1106A_A1836"/>
<dbReference type="HOGENOM" id="CLU_005391_0_0_4"/>
<dbReference type="UniPathway" id="UPA00529">
    <property type="reaction ID" value="UER00386"/>
</dbReference>
<dbReference type="Proteomes" id="UP000006738">
    <property type="component" value="Chromosome II"/>
</dbReference>
<dbReference type="GO" id="GO:0008802">
    <property type="term" value="F:betaine-aldehyde dehydrogenase (NAD+) activity"/>
    <property type="evidence" value="ECO:0007669"/>
    <property type="project" value="UniProtKB-UniRule"/>
</dbReference>
<dbReference type="GO" id="GO:0046872">
    <property type="term" value="F:metal ion binding"/>
    <property type="evidence" value="ECO:0007669"/>
    <property type="project" value="UniProtKB-KW"/>
</dbReference>
<dbReference type="GO" id="GO:0019285">
    <property type="term" value="P:glycine betaine biosynthetic process from choline"/>
    <property type="evidence" value="ECO:0007669"/>
    <property type="project" value="UniProtKB-UniRule"/>
</dbReference>
<dbReference type="CDD" id="cd07090">
    <property type="entry name" value="ALDH_F9_TMBADH"/>
    <property type="match status" value="1"/>
</dbReference>
<dbReference type="FunFam" id="3.40.309.10:FF:000014">
    <property type="entry name" value="NAD/NADP-dependent betaine aldehyde dehydrogenase"/>
    <property type="match status" value="1"/>
</dbReference>
<dbReference type="FunFam" id="3.40.605.10:FF:000007">
    <property type="entry name" value="NAD/NADP-dependent betaine aldehyde dehydrogenase"/>
    <property type="match status" value="1"/>
</dbReference>
<dbReference type="Gene3D" id="3.40.605.10">
    <property type="entry name" value="Aldehyde Dehydrogenase, Chain A, domain 1"/>
    <property type="match status" value="1"/>
</dbReference>
<dbReference type="Gene3D" id="3.40.309.10">
    <property type="entry name" value="Aldehyde Dehydrogenase, Chain A, domain 2"/>
    <property type="match status" value="1"/>
</dbReference>
<dbReference type="HAMAP" id="MF_00804">
    <property type="entry name" value="BADH"/>
    <property type="match status" value="1"/>
</dbReference>
<dbReference type="InterPro" id="IPR016161">
    <property type="entry name" value="Ald_DH/histidinol_DH"/>
</dbReference>
<dbReference type="InterPro" id="IPR016163">
    <property type="entry name" value="Ald_DH_C"/>
</dbReference>
<dbReference type="InterPro" id="IPR016160">
    <property type="entry name" value="Ald_DH_CS_CYS"/>
</dbReference>
<dbReference type="InterPro" id="IPR029510">
    <property type="entry name" value="Ald_DH_CS_GLU"/>
</dbReference>
<dbReference type="InterPro" id="IPR016162">
    <property type="entry name" value="Ald_DH_N"/>
</dbReference>
<dbReference type="InterPro" id="IPR015590">
    <property type="entry name" value="Aldehyde_DH_dom"/>
</dbReference>
<dbReference type="InterPro" id="IPR011264">
    <property type="entry name" value="BADH"/>
</dbReference>
<dbReference type="NCBIfam" id="TIGR01804">
    <property type="entry name" value="BADH"/>
    <property type="match status" value="1"/>
</dbReference>
<dbReference type="NCBIfam" id="NF009725">
    <property type="entry name" value="PRK13252.1"/>
    <property type="match status" value="1"/>
</dbReference>
<dbReference type="PANTHER" id="PTHR11699">
    <property type="entry name" value="ALDEHYDE DEHYDROGENASE-RELATED"/>
    <property type="match status" value="1"/>
</dbReference>
<dbReference type="Pfam" id="PF00171">
    <property type="entry name" value="Aldedh"/>
    <property type="match status" value="1"/>
</dbReference>
<dbReference type="SUPFAM" id="SSF53720">
    <property type="entry name" value="ALDH-like"/>
    <property type="match status" value="1"/>
</dbReference>
<dbReference type="PROSITE" id="PS00070">
    <property type="entry name" value="ALDEHYDE_DEHYDR_CYS"/>
    <property type="match status" value="1"/>
</dbReference>
<dbReference type="PROSITE" id="PS00687">
    <property type="entry name" value="ALDEHYDE_DEHYDR_GLU"/>
    <property type="match status" value="1"/>
</dbReference>
<comment type="function">
    <text evidence="1">Involved in the biosynthesis of the osmoprotectant glycine betaine. Catalyzes the irreversible oxidation of betaine aldehyde to the corresponding acid.</text>
</comment>
<comment type="catalytic activity">
    <reaction evidence="1">
        <text>betaine aldehyde + NAD(+) + H2O = glycine betaine + NADH + 2 H(+)</text>
        <dbReference type="Rhea" id="RHEA:15305"/>
        <dbReference type="ChEBI" id="CHEBI:15377"/>
        <dbReference type="ChEBI" id="CHEBI:15378"/>
        <dbReference type="ChEBI" id="CHEBI:15710"/>
        <dbReference type="ChEBI" id="CHEBI:17750"/>
        <dbReference type="ChEBI" id="CHEBI:57540"/>
        <dbReference type="ChEBI" id="CHEBI:57945"/>
        <dbReference type="EC" id="1.2.1.8"/>
    </reaction>
    <physiologicalReaction direction="left-to-right" evidence="1">
        <dbReference type="Rhea" id="RHEA:15306"/>
    </physiologicalReaction>
</comment>
<comment type="cofactor">
    <cofactor evidence="1">
        <name>K(+)</name>
        <dbReference type="ChEBI" id="CHEBI:29103"/>
    </cofactor>
    <text evidence="1">Binds 2 potassium ions per subunit.</text>
</comment>
<comment type="pathway">
    <text evidence="1">Amine and polyamine biosynthesis; betaine biosynthesis via choline pathway; betaine from betaine aldehyde: step 1/1.</text>
</comment>
<comment type="subunit">
    <text evidence="1">Dimer of dimers.</text>
</comment>
<comment type="similarity">
    <text evidence="1">Belongs to the aldehyde dehydrogenase family.</text>
</comment>
<accession>A3P6B0</accession>
<keyword id="KW-0479">Metal-binding</keyword>
<keyword id="KW-0520">NAD</keyword>
<keyword id="KW-0521">NADP</keyword>
<keyword id="KW-0558">Oxidation</keyword>
<keyword id="KW-0560">Oxidoreductase</keyword>
<keyword id="KW-0630">Potassium</keyword>
<feature type="chain" id="PRO_1000047037" description="Betaine aldehyde dehydrogenase">
    <location>
        <begin position="1"/>
        <end position="489"/>
    </location>
</feature>
<feature type="active site" description="Charge relay system" evidence="1">
    <location>
        <position position="162"/>
    </location>
</feature>
<feature type="active site" description="Proton acceptor" evidence="1">
    <location>
        <position position="251"/>
    </location>
</feature>
<feature type="active site" description="Nucleophile" evidence="1">
    <location>
        <position position="285"/>
    </location>
</feature>
<feature type="active site" description="Charge relay system" evidence="1">
    <location>
        <position position="463"/>
    </location>
</feature>
<feature type="binding site" evidence="1">
    <location>
        <position position="26"/>
    </location>
    <ligand>
        <name>K(+)</name>
        <dbReference type="ChEBI" id="CHEBI:29103"/>
        <label>1</label>
    </ligand>
</feature>
<feature type="binding site" evidence="1">
    <location>
        <position position="93"/>
    </location>
    <ligand>
        <name>K(+)</name>
        <dbReference type="ChEBI" id="CHEBI:29103"/>
        <label>1</label>
    </ligand>
</feature>
<feature type="binding site" evidence="1">
    <location>
        <begin position="150"/>
        <end position="152"/>
    </location>
    <ligand>
        <name>NAD(+)</name>
        <dbReference type="ChEBI" id="CHEBI:57540"/>
    </ligand>
</feature>
<feature type="binding site" evidence="1">
    <location>
        <begin position="176"/>
        <end position="179"/>
    </location>
    <ligand>
        <name>NAD(+)</name>
        <dbReference type="ChEBI" id="CHEBI:57540"/>
    </ligand>
</feature>
<feature type="binding site" evidence="1">
    <location>
        <position position="180"/>
    </location>
    <ligand>
        <name>K(+)</name>
        <dbReference type="ChEBI" id="CHEBI:29103"/>
        <label>1</label>
    </ligand>
</feature>
<feature type="binding site" evidence="1">
    <location>
        <begin position="229"/>
        <end position="232"/>
    </location>
    <ligand>
        <name>NAD(+)</name>
        <dbReference type="ChEBI" id="CHEBI:57540"/>
    </ligand>
</feature>
<feature type="binding site" evidence="1">
    <location>
        <position position="245"/>
    </location>
    <ligand>
        <name>K(+)</name>
        <dbReference type="ChEBI" id="CHEBI:29103"/>
        <label>2</label>
    </ligand>
</feature>
<feature type="binding site" evidence="1">
    <location>
        <position position="253"/>
    </location>
    <ligand>
        <name>NAD(+)</name>
        <dbReference type="ChEBI" id="CHEBI:57540"/>
    </ligand>
</feature>
<feature type="binding site" description="covalent" evidence="1">
    <location>
        <position position="285"/>
    </location>
    <ligand>
        <name>NAD(+)</name>
        <dbReference type="ChEBI" id="CHEBI:57540"/>
    </ligand>
</feature>
<feature type="binding site" evidence="1">
    <location>
        <position position="386"/>
    </location>
    <ligand>
        <name>NAD(+)</name>
        <dbReference type="ChEBI" id="CHEBI:57540"/>
    </ligand>
</feature>
<feature type="binding site" evidence="1">
    <location>
        <position position="456"/>
    </location>
    <ligand>
        <name>K(+)</name>
        <dbReference type="ChEBI" id="CHEBI:29103"/>
        <label>2</label>
    </ligand>
</feature>
<feature type="binding site" evidence="1">
    <location>
        <position position="459"/>
    </location>
    <ligand>
        <name>K(+)</name>
        <dbReference type="ChEBI" id="CHEBI:29103"/>
        <label>2</label>
    </ligand>
</feature>
<feature type="site" description="Seems to be a necessary countercharge to the potassium cations" evidence="1">
    <location>
        <position position="247"/>
    </location>
</feature>
<feature type="modified residue" description="Cysteine sulfenic acid (-SOH)" evidence="1">
    <location>
        <position position="285"/>
    </location>
</feature>
<proteinExistence type="inferred from homology"/>
<evidence type="ECO:0000255" key="1">
    <source>
        <dbReference type="HAMAP-Rule" id="MF_00804"/>
    </source>
</evidence>
<name>BETB_BURP0</name>
<protein>
    <recommendedName>
        <fullName evidence="1">Betaine aldehyde dehydrogenase</fullName>
        <shortName evidence="1">BADH</shortName>
        <ecNumber evidence="1">1.2.1.8</ecNumber>
    </recommendedName>
</protein>